<feature type="chain" id="PRO_1000149693" description="Replication restart protein DnaT">
    <location>
        <begin position="1"/>
        <end position="179"/>
    </location>
</feature>
<feature type="region of interest" description="Required for trimerization and to bind PriB" evidence="4">
    <location>
        <begin position="1"/>
        <end position="83"/>
    </location>
</feature>
<feature type="region of interest" description="Binds ssDNA" evidence="4">
    <location>
        <begin position="84"/>
        <end position="179"/>
    </location>
</feature>
<feature type="region of interest" description="Disordered" evidence="2">
    <location>
        <begin position="151"/>
        <end position="179"/>
    </location>
</feature>
<feature type="compositionally biased region" description="Basic and acidic residues" evidence="2">
    <location>
        <begin position="159"/>
        <end position="173"/>
    </location>
</feature>
<feature type="mutagenesis site" description="No ssDNA-binding (in a residue 42-179 fragment)." evidence="3">
    <original>WQQK</original>
    <variation>AQQA</variation>
    <location>
        <begin position="140"/>
        <end position="143"/>
    </location>
</feature>
<feature type="mutagenesis site" description="Decreased ssDNA-binding (in a residue 42-179 fragment)." evidence="3">
    <original>W</original>
    <variation>A</variation>
    <location>
        <position position="140"/>
    </location>
</feature>
<proteinExistence type="evidence at protein level"/>
<accession>A6THX4</accession>
<gene>
    <name evidence="1" type="primary">dnaT</name>
    <name type="ordered locus">KPN78578_47340</name>
    <name type="ORF">KPN_04812</name>
</gene>
<protein>
    <recommendedName>
        <fullName evidence="1">Replication restart protein DnaT</fullName>
    </recommendedName>
    <alternativeName>
        <fullName evidence="6">Primosomal protein i</fullName>
    </alternativeName>
</protein>
<dbReference type="EMBL" id="CP000647">
    <property type="protein sequence ID" value="ABR80158.1"/>
    <property type="molecule type" value="Genomic_DNA"/>
</dbReference>
<dbReference type="RefSeq" id="WP_002887624.1">
    <property type="nucleotide sequence ID" value="NC_009648.1"/>
</dbReference>
<dbReference type="SMR" id="A6THX4"/>
<dbReference type="STRING" id="272620.KPN_04812"/>
<dbReference type="PaxDb" id="272620-KPN_04812"/>
<dbReference type="EnsemblBacteria" id="ABR80158">
    <property type="protein sequence ID" value="ABR80158"/>
    <property type="gene ID" value="KPN_04812"/>
</dbReference>
<dbReference type="KEGG" id="kpn:KPN_04812"/>
<dbReference type="HOGENOM" id="CLU_1501592_0_0_6"/>
<dbReference type="Proteomes" id="UP000000265">
    <property type="component" value="Chromosome"/>
</dbReference>
<dbReference type="GO" id="GO:1990077">
    <property type="term" value="C:primosome complex"/>
    <property type="evidence" value="ECO:0007669"/>
    <property type="project" value="UniProtKB-KW"/>
</dbReference>
<dbReference type="GO" id="GO:0006269">
    <property type="term" value="P:DNA replication, synthesis of primer"/>
    <property type="evidence" value="ECO:0007669"/>
    <property type="project" value="UniProtKB-UniRule"/>
</dbReference>
<dbReference type="Gene3D" id="1.10.8.1180">
    <property type="match status" value="1"/>
</dbReference>
<dbReference type="HAMAP" id="MF_01061">
    <property type="entry name" value="DnaT"/>
    <property type="match status" value="1"/>
</dbReference>
<dbReference type="InterPro" id="IPR020917">
    <property type="entry name" value="DnaT"/>
</dbReference>
<dbReference type="InterPro" id="IPR040480">
    <property type="entry name" value="DnaT_DNA_bind"/>
</dbReference>
<dbReference type="NCBIfam" id="NF002770">
    <property type="entry name" value="PRK02854.1"/>
    <property type="match status" value="1"/>
</dbReference>
<dbReference type="Pfam" id="PF17948">
    <property type="entry name" value="DnaT"/>
    <property type="match status" value="1"/>
</dbReference>
<name>DNAT_KLEP7</name>
<evidence type="ECO:0000255" key="1">
    <source>
        <dbReference type="HAMAP-Rule" id="MF_01061"/>
    </source>
</evidence>
<evidence type="ECO:0000256" key="2">
    <source>
        <dbReference type="SAM" id="MobiDB-lite"/>
    </source>
</evidence>
<evidence type="ECO:0000269" key="3">
    <source>
    </source>
</evidence>
<evidence type="ECO:0000269" key="4">
    <source>
    </source>
</evidence>
<evidence type="ECO:0000269" key="5">
    <source>
    </source>
</evidence>
<evidence type="ECO:0000303" key="6">
    <source>
    </source>
</evidence>
<sequence>MSSRILTSHFSGLEEFLQQHAALLAKSTDGTVAVFANNAPAFYALTPARLAQLLELEARLARPGSDIALDPQFFEEPAAAPVAVPMGKFAMYAGWQPDADFQRLAALWGIALSQPVTPEELAAFVAYWQAEGKVFHHVQWQQKLARSVQISRASNGGQPKRDVNSVSEPDSHIPRGFRG</sequence>
<reference key="1">
    <citation type="submission" date="2006-09" db="EMBL/GenBank/DDBJ databases">
        <authorList>
            <consortium name="The Klebsiella pneumonia Genome Sequencing Project"/>
            <person name="McClelland M."/>
            <person name="Sanderson E.K."/>
            <person name="Spieth J."/>
            <person name="Clifton W.S."/>
            <person name="Latreille P."/>
            <person name="Sabo A."/>
            <person name="Pepin K."/>
            <person name="Bhonagiri V."/>
            <person name="Porwollik S."/>
            <person name="Ali J."/>
            <person name="Wilson R.K."/>
        </authorList>
    </citation>
    <scope>NUCLEOTIDE SEQUENCE [LARGE SCALE GENOMIC DNA]</scope>
    <source>
        <strain>ATCC 700721 / MGH 78578</strain>
    </source>
</reference>
<reference key="2">
    <citation type="journal article" date="2013" name="Genes Cells">
        <title>DnaT is a single-stranded DNA binding protein.</title>
        <authorList>
            <person name="Huang Y.H."/>
            <person name="Lin M.J."/>
            <person name="Huang C.Y."/>
        </authorList>
    </citation>
    <scope>SUBUNIT</scope>
    <scope>DOMAIN</scope>
    <scope>DNA-BINDING</scope>
    <scope>MUTAGENESIS OF 140-TRP--LYS-143 AND TRP-140</scope>
    <source>
        <strain>ATCC 700721 / MGH 78578</strain>
    </source>
</reference>
<reference key="3">
    <citation type="journal article" date="2013" name="Biochem. Biophys. Res. Commun.">
        <title>The N-terminal domain of DnaT, a primosomal DNA replication protein, is crucial for PriB binding and self-trimerization.</title>
        <authorList>
            <person name="Huang Y.H."/>
            <person name="Huang C.Y."/>
        </authorList>
    </citation>
    <scope>SUBUNIT</scope>
    <scope>INTERACTION WITH PRIB</scope>
    <scope>DOMAIN</scope>
    <scope>DNA-BINDING</scope>
    <source>
        <strain>ATCC 700721 / MGH 78578</strain>
    </source>
</reference>
<reference key="4">
    <citation type="journal article" date="2016" name="Biochem. Biophys. Res. Commun.">
        <title>DnaT is a PriC-binding protein.</title>
        <authorList>
            <person name="Huang C.C."/>
            <person name="Huang C.Y."/>
        </authorList>
    </citation>
    <scope>SUBUNIT</scope>
    <scope>INTERACTION WITH PRIC</scope>
    <source>
        <strain>ATCC 700721 / MGH 78578</strain>
    </source>
</reference>
<organism>
    <name type="scientific">Klebsiella pneumoniae subsp. pneumoniae (strain ATCC 700721 / MGH 78578)</name>
    <dbReference type="NCBI Taxonomy" id="272620"/>
    <lineage>
        <taxon>Bacteria</taxon>
        <taxon>Pseudomonadati</taxon>
        <taxon>Pseudomonadota</taxon>
        <taxon>Gammaproteobacteria</taxon>
        <taxon>Enterobacterales</taxon>
        <taxon>Enterobacteriaceae</taxon>
        <taxon>Klebsiella/Raoultella group</taxon>
        <taxon>Klebsiella</taxon>
        <taxon>Klebsiella pneumoniae complex</taxon>
    </lineage>
</organism>
<keyword id="KW-0235">DNA replication</keyword>
<keyword id="KW-0238">DNA-binding</keyword>
<keyword id="KW-0639">Primosome</keyword>
<comment type="function">
    <text evidence="1">Involved in the restart of stalled replication forks, which reloads the replicative helicase on sites other than the origin of replication. Can function in multiple replication restart pathways. Displaces ssDNA from a PriB-ssDNA complex. Probably forms a spiral filament on ssDNA.</text>
</comment>
<comment type="function">
    <text evidence="3 4">Binds single-stranded (ss)DNA (PubMed:24118681, PubMed:24280305). The minimal binding site is about 26 +/- 2 nucleotides (nt) per trimer (PubMed:24118681). Two DNA-protein complexes are seen with 55 nt-long ssDNA (PubMed:24118681).</text>
</comment>
<comment type="subunit">
    <text evidence="1 3 4 5">Homotrimer (PubMed:24118681). Interacts with PriB (PubMed:24280305). Interacts with PriC (PubMed:27387236). Component of the replication restart primosome. Primosome assembly occurs via a 'hand-off' mechanism. PriA binds to replication forks, subsequently PriB then DnaT bind; DnaT then displaces ssDNA to generate the helicase loading substrate.</text>
</comment>
<comment type="domain">
    <text evidence="3 4">The N-terminus (residues 1-41) is not required to bind ssDNA or for homotrimer formation (PubMed:24118681). A slightly longer N-terminus (residues 1-83) is required for trimerization and to interact with DnaT (PubMed:24280305). The C-terminus (residues 84-179) binds ssDNA (PubMed:24280305).</text>
</comment>
<comment type="similarity">
    <text evidence="1">Belongs to the DnaT family.</text>
</comment>